<feature type="transit peptide" description="Chloroplast" evidence="2">
    <location>
        <begin position="1"/>
        <end position="63"/>
    </location>
</feature>
<feature type="chain" id="PRO_0000420843" description="Alpha-glucan phosphorylase 1">
    <location>
        <begin position="64"/>
        <end position="962"/>
    </location>
</feature>
<feature type="region of interest" description="Disordered" evidence="3">
    <location>
        <begin position="525"/>
        <end position="552"/>
    </location>
</feature>
<feature type="modified residue" description="N6-(pyridoxal phosphate)lysine" evidence="1">
    <location>
        <position position="808"/>
    </location>
</feature>
<evidence type="ECO:0000250" key="1"/>
<evidence type="ECO:0000255" key="2"/>
<evidence type="ECO:0000256" key="3">
    <source>
        <dbReference type="SAM" id="MobiDB-lite"/>
    </source>
</evidence>
<evidence type="ECO:0000269" key="4">
    <source>
    </source>
</evidence>
<evidence type="ECO:0000269" key="5">
    <source>
    </source>
</evidence>
<evidence type="ECO:0000305" key="6"/>
<organism>
    <name type="scientific">Arabidopsis thaliana</name>
    <name type="common">Mouse-ear cress</name>
    <dbReference type="NCBI Taxonomy" id="3702"/>
    <lineage>
        <taxon>Eukaryota</taxon>
        <taxon>Viridiplantae</taxon>
        <taxon>Streptophyta</taxon>
        <taxon>Embryophyta</taxon>
        <taxon>Tracheophyta</taxon>
        <taxon>Spermatophyta</taxon>
        <taxon>Magnoliopsida</taxon>
        <taxon>eudicotyledons</taxon>
        <taxon>Gunneridae</taxon>
        <taxon>Pentapetalae</taxon>
        <taxon>rosids</taxon>
        <taxon>malvids</taxon>
        <taxon>Brassicales</taxon>
        <taxon>Brassicaceae</taxon>
        <taxon>Camelineae</taxon>
        <taxon>Arabidopsis</taxon>
    </lineage>
</organism>
<sequence length="962" mass="108585">MDTMRISGVSTGAEVLIQCNSLSSLVSRRCDDGKWRTRMFPARNRDLRPSPTRRSFLSVKSISSEPKAKVTDAVLDSEQEVFISSMNPFAPDAASVASSIKYHAEFTPLFSPEKFELPKAFFATAQSVRDALIMNWNATYEYYNRVNVKQAYYLSMEFLQGRALSNAVGNLGLNSAYGDALKRLGFDLESVASQEPDPALGNGGLGRLASCFLDSMATLNYPAWGYGLRYKYGLFKQRITKDGQEEAAEDWLELSNPWEIVRNDVSYPIKFYGKVVFGSDGKKRWIGGEDIVAVAYDVPIPGYKTKTTINLRLWSTKAPSEDFDLSSYNSGKHTEAAEALFNAEKICFVLYPGDESTEGKALRLKQQYTLCSASLQDIVARFETRSGGNVNWEEFPEKVAVQMNDTHPTLCIPELMRILMDLKGLSWEDAWKITQRTVAYTNHTVLPEALEKWSLELMEKLLPRHVEIIEKIDEELVRTIVSEYGTADPDLLEEKLKAMRILENVELPSAFADVIVKPVNKPVTAKDAQNGVKTEQEEEKTAGEEEEDEVIPEPTVEPPKMVRMANLAVVGGHAVNGVAEIHSEIVKQDVFNDFVQLWPEKFQNKTNGVTPRRWIRFCNPYLSDIITNWIGTEDWVLNTEKVAELRKFADNEDLQSEWRAAKKKNKLKVVSLIKERTGYTVSPDAMFDIQIKRIHEYKRQLLNILGIVYRYKKMKEMSASEREKAFVPRVCIFGGKAFATYVQAKRIVKFITDVASTINHDPEIGDLLKVIFVPDYNVSVAELLIPASELSQHISTAGMEASGTSNMKFSMNGCVLIGTLDGANVEIREEVGEENFFLFGAKADQIVNLRKERAEGKFVPDPTFEEVKKFVGSGVFGSNSYDELIGSLEGNEGFGRADYFLVGKDFPSYIECQEKVDEAYRDQKRWTRMSIMNTAGSFKFSSDRTIHEYAKDIWNIKQVELP</sequence>
<gene>
    <name type="primary">PHS1</name>
    <name type="ordered locus">At3g29320</name>
    <name type="ORF">MUO10.17</name>
</gene>
<comment type="function">
    <text evidence="1 4">Phosphorylase is an important allosteric enzyme in carbohydrate metabolism. Enzymes from different sources differ in their regulatory mechanisms and in their natural substrates. However, all known phosphorylases share catalytic and structural properties (By similarity). May be not required for the degradation of starch, but the phosphorolysis of starch may play an important role in water stress tolerance.</text>
</comment>
<comment type="catalytic activity">
    <reaction>
        <text>[(1-&gt;4)-alpha-D-glucosyl](n) + phosphate = [(1-&gt;4)-alpha-D-glucosyl](n-1) + alpha-D-glucose 1-phosphate</text>
        <dbReference type="Rhea" id="RHEA:41732"/>
        <dbReference type="Rhea" id="RHEA-COMP:9584"/>
        <dbReference type="Rhea" id="RHEA-COMP:9586"/>
        <dbReference type="ChEBI" id="CHEBI:15444"/>
        <dbReference type="ChEBI" id="CHEBI:43474"/>
        <dbReference type="ChEBI" id="CHEBI:58601"/>
        <dbReference type="EC" id="2.4.1.1"/>
    </reaction>
</comment>
<comment type="cofactor">
    <cofactor evidence="1">
        <name>pyridoxal 5'-phosphate</name>
        <dbReference type="ChEBI" id="CHEBI:597326"/>
    </cofactor>
</comment>
<comment type="subcellular location">
    <subcellularLocation>
        <location evidence="5">Plastid</location>
        <location evidence="5">Chloroplast stroma</location>
    </subcellularLocation>
</comment>
<comment type="disruption phenotype">
    <text evidence="4">Small white lesions on the tips or margins of fully expanded leaves.</text>
</comment>
<comment type="similarity">
    <text evidence="6">Belongs to the glycogen phosphorylase family.</text>
</comment>
<keyword id="KW-0021">Allosteric enzyme</keyword>
<keyword id="KW-0119">Carbohydrate metabolism</keyword>
<keyword id="KW-0150">Chloroplast</keyword>
<keyword id="KW-0328">Glycosyltransferase</keyword>
<keyword id="KW-0934">Plastid</keyword>
<keyword id="KW-0663">Pyridoxal phosphate</keyword>
<keyword id="KW-1185">Reference proteome</keyword>
<keyword id="KW-0808">Transferase</keyword>
<keyword id="KW-0809">Transit peptide</keyword>
<proteinExistence type="evidence at protein level"/>
<protein>
    <recommendedName>
        <fullName>Alpha-glucan phosphorylase 1</fullName>
        <shortName>AtPHS1</shortName>
        <ecNumber>2.4.1.1</ecNumber>
    </recommendedName>
    <alternativeName>
        <fullName>Alpha-glucan phosphorylase, L isozyme</fullName>
    </alternativeName>
    <alternativeName>
        <fullName>Starch phosphorylase L</fullName>
    </alternativeName>
</protein>
<reference key="1">
    <citation type="journal article" date="2000" name="DNA Res.">
        <title>Structural analysis of Arabidopsis thaliana chromosome 3. II. Sequence features of the 4,251,695 bp regions covered by 90 P1, TAC and BAC clones.</title>
        <authorList>
            <person name="Kaneko T."/>
            <person name="Katoh T."/>
            <person name="Sato S."/>
            <person name="Nakamura Y."/>
            <person name="Asamizu E."/>
            <person name="Tabata S."/>
        </authorList>
    </citation>
    <scope>NUCLEOTIDE SEQUENCE [LARGE SCALE GENOMIC DNA]</scope>
    <source>
        <strain>cv. Columbia</strain>
    </source>
</reference>
<reference key="2">
    <citation type="journal article" date="2017" name="Plant J.">
        <title>Araport11: a complete reannotation of the Arabidopsis thaliana reference genome.</title>
        <authorList>
            <person name="Cheng C.Y."/>
            <person name="Krishnakumar V."/>
            <person name="Chan A.P."/>
            <person name="Thibaud-Nissen F."/>
            <person name="Schobel S."/>
            <person name="Town C.D."/>
        </authorList>
    </citation>
    <scope>GENOME REANNOTATION</scope>
    <source>
        <strain>cv. Columbia</strain>
    </source>
</reference>
<reference key="3">
    <citation type="journal article" date="2003" name="Science">
        <title>Empirical analysis of transcriptional activity in the Arabidopsis genome.</title>
        <authorList>
            <person name="Yamada K."/>
            <person name="Lim J."/>
            <person name="Dale J.M."/>
            <person name="Chen H."/>
            <person name="Shinn P."/>
            <person name="Palm C.J."/>
            <person name="Southwick A.M."/>
            <person name="Wu H.C."/>
            <person name="Kim C.J."/>
            <person name="Nguyen M."/>
            <person name="Pham P.K."/>
            <person name="Cheuk R.F."/>
            <person name="Karlin-Newmann G."/>
            <person name="Liu S.X."/>
            <person name="Lam B."/>
            <person name="Sakano H."/>
            <person name="Wu T."/>
            <person name="Yu G."/>
            <person name="Miranda M."/>
            <person name="Quach H.L."/>
            <person name="Tripp M."/>
            <person name="Chang C.H."/>
            <person name="Lee J.M."/>
            <person name="Toriumi M.J."/>
            <person name="Chan M.M."/>
            <person name="Tang C.C."/>
            <person name="Onodera C.S."/>
            <person name="Deng J.M."/>
            <person name="Akiyama K."/>
            <person name="Ansari Y."/>
            <person name="Arakawa T."/>
            <person name="Banh J."/>
            <person name="Banno F."/>
            <person name="Bowser L."/>
            <person name="Brooks S.Y."/>
            <person name="Carninci P."/>
            <person name="Chao Q."/>
            <person name="Choy N."/>
            <person name="Enju A."/>
            <person name="Goldsmith A.D."/>
            <person name="Gurjal M."/>
            <person name="Hansen N.F."/>
            <person name="Hayashizaki Y."/>
            <person name="Johnson-Hopson C."/>
            <person name="Hsuan V.W."/>
            <person name="Iida K."/>
            <person name="Karnes M."/>
            <person name="Khan S."/>
            <person name="Koesema E."/>
            <person name="Ishida J."/>
            <person name="Jiang P.X."/>
            <person name="Jones T."/>
            <person name="Kawai J."/>
            <person name="Kamiya A."/>
            <person name="Meyers C."/>
            <person name="Nakajima M."/>
            <person name="Narusaka M."/>
            <person name="Seki M."/>
            <person name="Sakurai T."/>
            <person name="Satou M."/>
            <person name="Tamse R."/>
            <person name="Vaysberg M."/>
            <person name="Wallender E.K."/>
            <person name="Wong C."/>
            <person name="Yamamura Y."/>
            <person name="Yuan S."/>
            <person name="Shinozaki K."/>
            <person name="Davis R.W."/>
            <person name="Theologis A."/>
            <person name="Ecker J.R."/>
        </authorList>
    </citation>
    <scope>NUCLEOTIDE SEQUENCE [LARGE SCALE MRNA]</scope>
    <source>
        <strain>cv. Columbia</strain>
    </source>
</reference>
<reference key="4">
    <citation type="journal article" date="2004" name="Plant Physiol.">
        <title>Plastidial alpha-glucan phosphorylase is not required for starch degradation in Arabidopsis leaves but has a role in the tolerance of abiotic stress.</title>
        <authorList>
            <person name="Zeeman S.C."/>
            <person name="Thorneycroft D."/>
            <person name="Schupp N."/>
            <person name="Chapple A."/>
            <person name="Weck M."/>
            <person name="Dunstan H."/>
            <person name="Haldimann P."/>
            <person name="Bechtold N."/>
            <person name="Smith A.M."/>
            <person name="Smith S.M."/>
        </authorList>
    </citation>
    <scope>FUNCTION</scope>
    <scope>DISRUPTION PHENOTYPE</scope>
    <source>
        <strain>cv. Wassilewskija</strain>
    </source>
</reference>
<reference key="5">
    <citation type="journal article" date="2007" name="Mol. Cell. Proteomics">
        <title>Multidimensional protein identification technology (MudPIT) analysis of ubiquitinated proteins in plants.</title>
        <authorList>
            <person name="Maor R."/>
            <person name="Jones A."/>
            <person name="Nuehse T.S."/>
            <person name="Studholme D.J."/>
            <person name="Peck S.C."/>
            <person name="Shirasu K."/>
        </authorList>
    </citation>
    <scope>IDENTIFICATION BY MASS SPECTROMETRY [LARGE SCALE ANALYSIS]</scope>
    <source>
        <strain>cv. Landsberg erecta</strain>
    </source>
</reference>
<reference key="6">
    <citation type="journal article" date="2008" name="PLoS ONE">
        <title>Sorting signals, N-terminal modifications and abundance of the chloroplast proteome.</title>
        <authorList>
            <person name="Zybailov B."/>
            <person name="Rutschow H."/>
            <person name="Friso G."/>
            <person name="Rudella A."/>
            <person name="Emanuelsson O."/>
            <person name="Sun Q."/>
            <person name="van Wijk K.J."/>
        </authorList>
    </citation>
    <scope>IDENTIFICATION BY MASS SPECTROMETRY</scope>
    <scope>SUBCELLULAR LOCATION [LARGE SCALE ANALYSIS]</scope>
</reference>
<dbReference type="EC" id="2.4.1.1"/>
<dbReference type="EMBL" id="AP001309">
    <property type="protein sequence ID" value="BAB02576.1"/>
    <property type="molecule type" value="Genomic_DNA"/>
</dbReference>
<dbReference type="EMBL" id="CP002686">
    <property type="protein sequence ID" value="AEE77567.1"/>
    <property type="molecule type" value="Genomic_DNA"/>
</dbReference>
<dbReference type="EMBL" id="AY049235">
    <property type="protein sequence ID" value="AAK83578.1"/>
    <property type="molecule type" value="mRNA"/>
</dbReference>
<dbReference type="EMBL" id="BT003015">
    <property type="protein sequence ID" value="AAO23580.1"/>
    <property type="molecule type" value="mRNA"/>
</dbReference>
<dbReference type="RefSeq" id="NP_189578.1">
    <property type="nucleotide sequence ID" value="NM_113857.3"/>
</dbReference>
<dbReference type="SMR" id="Q9LIB2"/>
<dbReference type="BioGRID" id="7919">
    <property type="interactions" value="3"/>
</dbReference>
<dbReference type="FunCoup" id="Q9LIB2">
    <property type="interactions" value="2522"/>
</dbReference>
<dbReference type="IntAct" id="Q9LIB2">
    <property type="interactions" value="1"/>
</dbReference>
<dbReference type="STRING" id="3702.Q9LIB2"/>
<dbReference type="CAZy" id="GT35">
    <property type="family name" value="Glycosyltransferase Family 35"/>
</dbReference>
<dbReference type="iPTMnet" id="Q9LIB2"/>
<dbReference type="PaxDb" id="3702-AT3G29320.1"/>
<dbReference type="ProMEX" id="Q9LIB2"/>
<dbReference type="ProteomicsDB" id="235063"/>
<dbReference type="EnsemblPlants" id="AT3G29320.1">
    <property type="protein sequence ID" value="AT3G29320.1"/>
    <property type="gene ID" value="AT3G29320"/>
</dbReference>
<dbReference type="GeneID" id="822590"/>
<dbReference type="Gramene" id="AT3G29320.1">
    <property type="protein sequence ID" value="AT3G29320.1"/>
    <property type="gene ID" value="AT3G29320"/>
</dbReference>
<dbReference type="KEGG" id="ath:AT3G29320"/>
<dbReference type="Araport" id="AT3G29320"/>
<dbReference type="TAIR" id="AT3G29320">
    <property type="gene designation" value="PHS1"/>
</dbReference>
<dbReference type="eggNOG" id="KOG2099">
    <property type="taxonomic scope" value="Eukaryota"/>
</dbReference>
<dbReference type="HOGENOM" id="CLU_010198_1_1_1"/>
<dbReference type="InParanoid" id="Q9LIB2"/>
<dbReference type="OMA" id="HCACSVA"/>
<dbReference type="PhylomeDB" id="Q9LIB2"/>
<dbReference type="BioCyc" id="ARA:AT3G29320-MONOMER"/>
<dbReference type="BioCyc" id="MetaCyc:AT3G29320-MONOMER"/>
<dbReference type="PRO" id="PR:Q9LIB2"/>
<dbReference type="Proteomes" id="UP000006548">
    <property type="component" value="Chromosome 3"/>
</dbReference>
<dbReference type="ExpressionAtlas" id="Q9LIB2">
    <property type="expression patterns" value="baseline and differential"/>
</dbReference>
<dbReference type="GO" id="GO:0009507">
    <property type="term" value="C:chloroplast"/>
    <property type="evidence" value="ECO:0007005"/>
    <property type="project" value="TAIR"/>
</dbReference>
<dbReference type="GO" id="GO:0009570">
    <property type="term" value="C:chloroplast stroma"/>
    <property type="evidence" value="ECO:0007005"/>
    <property type="project" value="TAIR"/>
</dbReference>
<dbReference type="GO" id="GO:0005829">
    <property type="term" value="C:cytosol"/>
    <property type="evidence" value="ECO:0007005"/>
    <property type="project" value="TAIR"/>
</dbReference>
<dbReference type="GO" id="GO:0009536">
    <property type="term" value="C:plastid"/>
    <property type="evidence" value="ECO:0000304"/>
    <property type="project" value="TAIR"/>
</dbReference>
<dbReference type="GO" id="GO:0004645">
    <property type="term" value="F:1,4-alpha-oligoglucan phosphorylase activity"/>
    <property type="evidence" value="ECO:0000315"/>
    <property type="project" value="TAIR"/>
</dbReference>
<dbReference type="GO" id="GO:0008184">
    <property type="term" value="F:glycogen phosphorylase activity"/>
    <property type="evidence" value="ECO:0007669"/>
    <property type="project" value="InterPro"/>
</dbReference>
<dbReference type="GO" id="GO:0030170">
    <property type="term" value="F:pyridoxal phosphate binding"/>
    <property type="evidence" value="ECO:0007669"/>
    <property type="project" value="InterPro"/>
</dbReference>
<dbReference type="GO" id="GO:0005975">
    <property type="term" value="P:carbohydrate metabolic process"/>
    <property type="evidence" value="ECO:0007669"/>
    <property type="project" value="InterPro"/>
</dbReference>
<dbReference type="GO" id="GO:0009266">
    <property type="term" value="P:response to temperature stimulus"/>
    <property type="evidence" value="ECO:0000270"/>
    <property type="project" value="TAIR"/>
</dbReference>
<dbReference type="GO" id="GO:0009414">
    <property type="term" value="P:response to water deprivation"/>
    <property type="evidence" value="ECO:0000315"/>
    <property type="project" value="TAIR"/>
</dbReference>
<dbReference type="CDD" id="cd04300">
    <property type="entry name" value="GT35_Glycogen_Phosphorylase"/>
    <property type="match status" value="1"/>
</dbReference>
<dbReference type="FunFam" id="3.40.50.2000:FF:000003">
    <property type="entry name" value="Alpha-1,4 glucan phosphorylase"/>
    <property type="match status" value="1"/>
</dbReference>
<dbReference type="FunFam" id="3.40.50.2000:FF:000105">
    <property type="entry name" value="Alpha-1,4 glucan phosphorylase"/>
    <property type="match status" value="1"/>
</dbReference>
<dbReference type="Gene3D" id="3.40.50.2000">
    <property type="entry name" value="Glycogen Phosphorylase B"/>
    <property type="match status" value="2"/>
</dbReference>
<dbReference type="InterPro" id="IPR011833">
    <property type="entry name" value="Glycg_phsphrylas"/>
</dbReference>
<dbReference type="InterPro" id="IPR000811">
    <property type="entry name" value="Glyco_trans_35"/>
</dbReference>
<dbReference type="InterPro" id="IPR035090">
    <property type="entry name" value="Pyridoxal_P_attach_site"/>
</dbReference>
<dbReference type="NCBIfam" id="TIGR02093">
    <property type="entry name" value="P_ylase"/>
    <property type="match status" value="1"/>
</dbReference>
<dbReference type="PANTHER" id="PTHR11468:SF28">
    <property type="entry name" value="ALPHA-GLUCAN PHOSPHORYLASE 1"/>
    <property type="match status" value="1"/>
</dbReference>
<dbReference type="PANTHER" id="PTHR11468">
    <property type="entry name" value="GLYCOGEN PHOSPHORYLASE"/>
    <property type="match status" value="1"/>
</dbReference>
<dbReference type="Pfam" id="PF00343">
    <property type="entry name" value="Phosphorylase"/>
    <property type="match status" value="2"/>
</dbReference>
<dbReference type="PIRSF" id="PIRSF000460">
    <property type="entry name" value="Pprylas_GlgP"/>
    <property type="match status" value="1"/>
</dbReference>
<dbReference type="SUPFAM" id="SSF53756">
    <property type="entry name" value="UDP-Glycosyltransferase/glycogen phosphorylase"/>
    <property type="match status" value="1"/>
</dbReference>
<dbReference type="PROSITE" id="PS00102">
    <property type="entry name" value="PHOSPHORYLASE"/>
    <property type="match status" value="1"/>
</dbReference>
<accession>Q9LIB2</accession>
<name>PHS1_ARATH</name>